<comment type="function">
    <text evidence="1">One of the primary rRNA binding proteins, it binds directly to 16S rRNA where it nucleates assembly of the body of the 30S subunit.</text>
</comment>
<comment type="function">
    <text evidence="1">With S5 and S12 plays an important role in translational accuracy.</text>
</comment>
<comment type="subunit">
    <text evidence="1">Part of the 30S ribosomal subunit. Contacts protein S5. The interaction surface between S4 and S5 is involved in control of translational fidelity.</text>
</comment>
<comment type="similarity">
    <text evidence="1">Belongs to the universal ribosomal protein uS4 family.</text>
</comment>
<evidence type="ECO:0000255" key="1">
    <source>
        <dbReference type="HAMAP-Rule" id="MF_01306"/>
    </source>
</evidence>
<evidence type="ECO:0000256" key="2">
    <source>
        <dbReference type="SAM" id="MobiDB-lite"/>
    </source>
</evidence>
<evidence type="ECO:0000305" key="3"/>
<organism>
    <name type="scientific">Methylibium petroleiphilum (strain ATCC BAA-1232 / LMG 22953 / PM1)</name>
    <dbReference type="NCBI Taxonomy" id="420662"/>
    <lineage>
        <taxon>Bacteria</taxon>
        <taxon>Pseudomonadati</taxon>
        <taxon>Pseudomonadota</taxon>
        <taxon>Betaproteobacteria</taxon>
        <taxon>Burkholderiales</taxon>
        <taxon>Sphaerotilaceae</taxon>
        <taxon>Methylibium</taxon>
    </lineage>
</organism>
<dbReference type="EMBL" id="CP000555">
    <property type="protein sequence ID" value="ABM96371.1"/>
    <property type="molecule type" value="Genomic_DNA"/>
</dbReference>
<dbReference type="RefSeq" id="WP_011830992.1">
    <property type="nucleotide sequence ID" value="NC_008825.1"/>
</dbReference>
<dbReference type="SMR" id="A2SLD2"/>
<dbReference type="STRING" id="420662.Mpe_A3418"/>
<dbReference type="KEGG" id="mpt:Mpe_A3418"/>
<dbReference type="eggNOG" id="COG0522">
    <property type="taxonomic scope" value="Bacteria"/>
</dbReference>
<dbReference type="HOGENOM" id="CLU_092403_0_2_4"/>
<dbReference type="Proteomes" id="UP000000366">
    <property type="component" value="Chromosome"/>
</dbReference>
<dbReference type="GO" id="GO:0015935">
    <property type="term" value="C:small ribosomal subunit"/>
    <property type="evidence" value="ECO:0007669"/>
    <property type="project" value="InterPro"/>
</dbReference>
<dbReference type="GO" id="GO:0019843">
    <property type="term" value="F:rRNA binding"/>
    <property type="evidence" value="ECO:0007669"/>
    <property type="project" value="UniProtKB-UniRule"/>
</dbReference>
<dbReference type="GO" id="GO:0003735">
    <property type="term" value="F:structural constituent of ribosome"/>
    <property type="evidence" value="ECO:0007669"/>
    <property type="project" value="InterPro"/>
</dbReference>
<dbReference type="GO" id="GO:0042274">
    <property type="term" value="P:ribosomal small subunit biogenesis"/>
    <property type="evidence" value="ECO:0007669"/>
    <property type="project" value="TreeGrafter"/>
</dbReference>
<dbReference type="GO" id="GO:0006412">
    <property type="term" value="P:translation"/>
    <property type="evidence" value="ECO:0007669"/>
    <property type="project" value="UniProtKB-UniRule"/>
</dbReference>
<dbReference type="CDD" id="cd00165">
    <property type="entry name" value="S4"/>
    <property type="match status" value="1"/>
</dbReference>
<dbReference type="FunFam" id="1.10.1050.10:FF:000001">
    <property type="entry name" value="30S ribosomal protein S4"/>
    <property type="match status" value="1"/>
</dbReference>
<dbReference type="FunFam" id="3.10.290.10:FF:000001">
    <property type="entry name" value="30S ribosomal protein S4"/>
    <property type="match status" value="1"/>
</dbReference>
<dbReference type="Gene3D" id="1.10.1050.10">
    <property type="entry name" value="Ribosomal Protein S4 Delta 41, Chain A, domain 1"/>
    <property type="match status" value="1"/>
</dbReference>
<dbReference type="Gene3D" id="3.10.290.10">
    <property type="entry name" value="RNA-binding S4 domain"/>
    <property type="match status" value="1"/>
</dbReference>
<dbReference type="HAMAP" id="MF_01306_B">
    <property type="entry name" value="Ribosomal_uS4_B"/>
    <property type="match status" value="1"/>
</dbReference>
<dbReference type="InterPro" id="IPR022801">
    <property type="entry name" value="Ribosomal_uS4"/>
</dbReference>
<dbReference type="InterPro" id="IPR005709">
    <property type="entry name" value="Ribosomal_uS4_bac-type"/>
</dbReference>
<dbReference type="InterPro" id="IPR018079">
    <property type="entry name" value="Ribosomal_uS4_CS"/>
</dbReference>
<dbReference type="InterPro" id="IPR001912">
    <property type="entry name" value="Ribosomal_uS4_N"/>
</dbReference>
<dbReference type="InterPro" id="IPR002942">
    <property type="entry name" value="S4_RNA-bd"/>
</dbReference>
<dbReference type="InterPro" id="IPR036986">
    <property type="entry name" value="S4_RNA-bd_sf"/>
</dbReference>
<dbReference type="NCBIfam" id="NF003717">
    <property type="entry name" value="PRK05327.1"/>
    <property type="match status" value="1"/>
</dbReference>
<dbReference type="NCBIfam" id="TIGR01017">
    <property type="entry name" value="rpsD_bact"/>
    <property type="match status" value="1"/>
</dbReference>
<dbReference type="PANTHER" id="PTHR11831">
    <property type="entry name" value="30S 40S RIBOSOMAL PROTEIN"/>
    <property type="match status" value="1"/>
</dbReference>
<dbReference type="PANTHER" id="PTHR11831:SF4">
    <property type="entry name" value="SMALL RIBOSOMAL SUBUNIT PROTEIN US4M"/>
    <property type="match status" value="1"/>
</dbReference>
<dbReference type="Pfam" id="PF00163">
    <property type="entry name" value="Ribosomal_S4"/>
    <property type="match status" value="1"/>
</dbReference>
<dbReference type="Pfam" id="PF01479">
    <property type="entry name" value="S4"/>
    <property type="match status" value="1"/>
</dbReference>
<dbReference type="SMART" id="SM01390">
    <property type="entry name" value="Ribosomal_S4"/>
    <property type="match status" value="1"/>
</dbReference>
<dbReference type="SMART" id="SM00363">
    <property type="entry name" value="S4"/>
    <property type="match status" value="1"/>
</dbReference>
<dbReference type="SUPFAM" id="SSF55174">
    <property type="entry name" value="Alpha-L RNA-binding motif"/>
    <property type="match status" value="1"/>
</dbReference>
<dbReference type="PROSITE" id="PS00632">
    <property type="entry name" value="RIBOSOMAL_S4"/>
    <property type="match status" value="1"/>
</dbReference>
<dbReference type="PROSITE" id="PS50889">
    <property type="entry name" value="S4"/>
    <property type="match status" value="1"/>
</dbReference>
<keyword id="KW-1185">Reference proteome</keyword>
<keyword id="KW-0687">Ribonucleoprotein</keyword>
<keyword id="KW-0689">Ribosomal protein</keyword>
<keyword id="KW-0694">RNA-binding</keyword>
<keyword id="KW-0699">rRNA-binding</keyword>
<sequence>MARYLGPKAKLARREGTDLFLKSARRAIGDKSKFETKPGQHGRTSGSRTSDFGLQLREKQKVKRMYGVLERQFRRYFAEAERRKGNTGANLLLLLESRLDNVVYRMGFGSTRAEARQLVSHKGITVNGEVVNIASYLVKTGDVVAVREKAKKQLRVTESLKLAESMGLPAWVQVDATKLEGVFKKSPDRDEFGSDINESLIVELYSR</sequence>
<protein>
    <recommendedName>
        <fullName evidence="1">Small ribosomal subunit protein uS4</fullName>
    </recommendedName>
    <alternativeName>
        <fullName evidence="3">30S ribosomal protein S4</fullName>
    </alternativeName>
</protein>
<reference key="1">
    <citation type="journal article" date="2007" name="J. Bacteriol.">
        <title>Whole-genome analysis of the methyl tert-butyl ether-degrading beta-proteobacterium Methylibium petroleiphilum PM1.</title>
        <authorList>
            <person name="Kane S.R."/>
            <person name="Chakicherla A.Y."/>
            <person name="Chain P.S.G."/>
            <person name="Schmidt R."/>
            <person name="Shin M.W."/>
            <person name="Legler T.C."/>
            <person name="Scow K.M."/>
            <person name="Larimer F.W."/>
            <person name="Lucas S.M."/>
            <person name="Richardson P.M."/>
            <person name="Hristova K.R."/>
        </authorList>
    </citation>
    <scope>NUCLEOTIDE SEQUENCE [LARGE SCALE GENOMIC DNA]</scope>
    <source>
        <strain>ATCC BAA-1232 / LMG 22953 / PM1</strain>
    </source>
</reference>
<proteinExistence type="inferred from homology"/>
<accession>A2SLD2</accession>
<feature type="chain" id="PRO_0000293311" description="Small ribosomal subunit protein uS4">
    <location>
        <begin position="1"/>
        <end position="207"/>
    </location>
</feature>
<feature type="domain" description="S4 RNA-binding" evidence="1">
    <location>
        <begin position="97"/>
        <end position="158"/>
    </location>
</feature>
<feature type="region of interest" description="Disordered" evidence="2">
    <location>
        <begin position="31"/>
        <end position="54"/>
    </location>
</feature>
<feature type="compositionally biased region" description="Polar residues" evidence="2">
    <location>
        <begin position="42"/>
        <end position="52"/>
    </location>
</feature>
<name>RS4_METPP</name>
<gene>
    <name evidence="1" type="primary">rpsD</name>
    <name type="ordered locus">Mpe_A3418</name>
</gene>